<proteinExistence type="evidence at protein level"/>
<feature type="signal peptide" evidence="4">
    <location>
        <begin position="1"/>
        <end position="19"/>
    </location>
</feature>
<feature type="chain" id="PRO_5000052212" description="Antihemorrhagic factor jMSF">
    <location>
        <begin position="20"/>
        <end position="324"/>
    </location>
</feature>
<feature type="domain" description="Cystatin fetuin-A-type 1" evidence="3">
    <location>
        <begin position="22"/>
        <end position="130"/>
    </location>
</feature>
<feature type="domain" description="Cystatin fetuin-A-type 2" evidence="3">
    <location>
        <begin position="141"/>
        <end position="254"/>
    </location>
</feature>
<feature type="short sequence motif" description="Cell attachment site" evidence="2">
    <location>
        <begin position="23"/>
        <end position="25"/>
    </location>
</feature>
<feature type="site" description="Cleavage; by trypsin" evidence="1">
    <location>
        <begin position="140"/>
        <end position="141"/>
    </location>
</feature>
<feature type="glycosylation site" description="N-linked (GlcNAc...) asparagine" evidence="4">
    <location>
        <position position="204"/>
    </location>
</feature>
<feature type="glycosylation site" description="N-linked (GlcNAc...) asparagine" evidence="4">
    <location>
        <position position="282"/>
    </location>
</feature>
<feature type="disulfide bond" evidence="3">
    <location>
        <begin position="28"/>
        <end position="315"/>
    </location>
</feature>
<feature type="disulfide bond" evidence="3">
    <location>
        <begin position="85"/>
        <end position="96"/>
    </location>
</feature>
<feature type="disulfide bond" evidence="3">
    <location>
        <begin position="110"/>
        <end position="129"/>
    </location>
</feature>
<feature type="disulfide bond" evidence="3">
    <location>
        <begin position="143"/>
        <end position="146"/>
    </location>
</feature>
<feature type="disulfide bond" evidence="3">
    <location>
        <begin position="205"/>
        <end position="217"/>
    </location>
</feature>
<feature type="disulfide bond" evidence="3">
    <location>
        <begin position="230"/>
        <end position="253"/>
    </location>
</feature>
<feature type="disulfide bond" evidence="5">
    <location>
        <begin position="287"/>
        <end position="291"/>
    </location>
</feature>
<reference key="1">
    <citation type="journal article" date="2008" name="Toxicon">
        <title>Properties and cDNA cloning of antihemorrhagic factors in sera of Chinese and Japanese mamushi (Gloydius blomhoffi).</title>
        <authorList>
            <person name="Aoki N."/>
            <person name="Tsutsumi K."/>
            <person name="Deshimaru M."/>
            <person name="Terada S."/>
        </authorList>
    </citation>
    <scope>NUCLEOTIDE SEQUENCE [MRNA]</scope>
    <scope>PROTEIN SEQUENCE OF 20-70; 189-231 AND 275-298</scope>
    <scope>FUNCTION</scope>
    <scope>GLYCOSYLATION AT ASN-204 AND ASN-282</scope>
    <scope>MASS SPECTROMETRY</scope>
    <source>
        <tissue>Liver</tissue>
        <tissue>Serum</tissue>
    </source>
</reference>
<evidence type="ECO:0000250" key="1"/>
<evidence type="ECO:0000255" key="2"/>
<evidence type="ECO:0000255" key="3">
    <source>
        <dbReference type="PROSITE-ProRule" id="PRU00861"/>
    </source>
</evidence>
<evidence type="ECO:0000269" key="4">
    <source>
    </source>
</evidence>
<evidence type="ECO:0000305" key="5"/>
<protein>
    <recommendedName>
        <fullName>Antihemorrhagic factor jMSF</fullName>
    </recommendedName>
    <alternativeName>
        <fullName>Japanese mamushi serum factor</fullName>
    </alternativeName>
</protein>
<name>FETJ_GLOBL</name>
<keyword id="KW-0903">Direct protein sequencing</keyword>
<keyword id="KW-1015">Disulfide bond</keyword>
<keyword id="KW-0325">Glycoprotein</keyword>
<keyword id="KW-0481">Metalloenzyme inhibitor</keyword>
<keyword id="KW-0483">Metalloprotease inhibitor</keyword>
<keyword id="KW-0646">Protease inhibitor</keyword>
<keyword id="KW-0677">Repeat</keyword>
<keyword id="KW-0964">Secreted</keyword>
<keyword id="KW-0732">Signal</keyword>
<accession>Q5KQS1</accession>
<dbReference type="EMBL" id="AB200172">
    <property type="protein sequence ID" value="BAD88539.1"/>
    <property type="molecule type" value="mRNA"/>
</dbReference>
<dbReference type="SMR" id="Q5KQS1"/>
<dbReference type="MEROPS" id="I25.042"/>
<dbReference type="iPTMnet" id="Q5KQS1"/>
<dbReference type="GO" id="GO:0072562">
    <property type="term" value="C:blood microparticle"/>
    <property type="evidence" value="ECO:0007669"/>
    <property type="project" value="TreeGrafter"/>
</dbReference>
<dbReference type="GO" id="GO:0031012">
    <property type="term" value="C:extracellular matrix"/>
    <property type="evidence" value="ECO:0007669"/>
    <property type="project" value="TreeGrafter"/>
</dbReference>
<dbReference type="GO" id="GO:0004869">
    <property type="term" value="F:cysteine-type endopeptidase inhibitor activity"/>
    <property type="evidence" value="ECO:0007669"/>
    <property type="project" value="InterPro"/>
</dbReference>
<dbReference type="CDD" id="cd00042">
    <property type="entry name" value="CY"/>
    <property type="match status" value="2"/>
</dbReference>
<dbReference type="FunFam" id="3.10.450.10:FF:000002">
    <property type="entry name" value="Kininogen 1"/>
    <property type="match status" value="1"/>
</dbReference>
<dbReference type="Gene3D" id="3.10.450.10">
    <property type="match status" value="2"/>
</dbReference>
<dbReference type="InterPro" id="IPR000010">
    <property type="entry name" value="Cystatin_dom"/>
</dbReference>
<dbReference type="InterPro" id="IPR025760">
    <property type="entry name" value="Cystatin_Fetuin_A"/>
</dbReference>
<dbReference type="InterPro" id="IPR046350">
    <property type="entry name" value="Cystatin_sf"/>
</dbReference>
<dbReference type="InterPro" id="IPR050735">
    <property type="entry name" value="Kininogen_Fetuin_HRG"/>
</dbReference>
<dbReference type="InterPro" id="IPR001363">
    <property type="entry name" value="Prot_inh_fetuin_CS"/>
</dbReference>
<dbReference type="PANTHER" id="PTHR13814:SF6">
    <property type="entry name" value="ALPHA-2-HS-GLYCOPROTEIN"/>
    <property type="match status" value="1"/>
</dbReference>
<dbReference type="PANTHER" id="PTHR13814">
    <property type="entry name" value="FETUIN"/>
    <property type="match status" value="1"/>
</dbReference>
<dbReference type="Pfam" id="PF00031">
    <property type="entry name" value="Cystatin"/>
    <property type="match status" value="1"/>
</dbReference>
<dbReference type="SMART" id="SM00043">
    <property type="entry name" value="CY"/>
    <property type="match status" value="2"/>
</dbReference>
<dbReference type="SUPFAM" id="SSF54403">
    <property type="entry name" value="Cystatin/monellin"/>
    <property type="match status" value="2"/>
</dbReference>
<dbReference type="PROSITE" id="PS51529">
    <property type="entry name" value="CYSTATIN_FETUIN_A"/>
    <property type="match status" value="2"/>
</dbReference>
<dbReference type="PROSITE" id="PS01254">
    <property type="entry name" value="FETUIN_1"/>
    <property type="match status" value="1"/>
</dbReference>
<dbReference type="PROSITE" id="PS01255">
    <property type="entry name" value="FETUIN_2"/>
    <property type="match status" value="1"/>
</dbReference>
<comment type="function">
    <text evidence="4">Suppress hemorrhage induced by metalloproteinases from the same venom (brevilysin-H3, -H4, -H6) and from habu venom (weak inhibition of the metalloproteinases HR2A). The non-hemorrhagic brevilysin-H2 is strongly inhibited by jMSF, whereas the brevilysin-L6 is not inhibited. Does not inhibit serine and cysteine proteases such as trypsin, chymotrypsin, thermolysin, and papain. The inhibition may occur by formation of a non-covalent complex between this protein and the proteinases at their metalloproteinase domains.</text>
</comment>
<comment type="subunit">
    <text evidence="1">Homodimer.</text>
</comment>
<comment type="subcellular location">
    <subcellularLocation>
        <location>Secreted</location>
    </subcellularLocation>
</comment>
<comment type="tissue specificity">
    <text>Expressed by the liver.</text>
</comment>
<comment type="mass spectrometry" mass="40500.0" method="MALDI" evidence="4"/>
<comment type="similarity">
    <text evidence="3">Belongs to the fetuin family.</text>
</comment>
<sequence length="324" mass="36663">MHFLVALVLLGQIIGSTLSSQVRGDLECDDREAKEWADQAVRYINEHKLHEYKQALNVIKNIVVVPWNGDLVAVFLKLNLLETECHVLDPTPVEKCTIRPQQNHAVEMDCDAKIMFDVETFKQDVFVKCHSTPDSVEDVRRNCPKCPILLSPRDPHVVDSVEYVLNKHNEQLSGHVYEVLEISRGQHKYEPEAFYVEFAIVEVNCTAQEAHDDHHHCHPNTAGEDHIAFCKATVFRSHASLEKPKHENFESDCVILDVKEGHAHSHLIEHHIGKYSTSPGQNSTVECVAECPVAFVNKEVPTDISDRHTTPVKGCPGKILHFQL</sequence>
<organism>
    <name type="scientific">Gloydius blomhoffii</name>
    <name type="common">Mamushi</name>
    <name type="synonym">Agkistrodon halys blomhoffi</name>
    <dbReference type="NCBI Taxonomy" id="242054"/>
    <lineage>
        <taxon>Eukaryota</taxon>
        <taxon>Metazoa</taxon>
        <taxon>Chordata</taxon>
        <taxon>Craniata</taxon>
        <taxon>Vertebrata</taxon>
        <taxon>Euteleostomi</taxon>
        <taxon>Lepidosauria</taxon>
        <taxon>Squamata</taxon>
        <taxon>Bifurcata</taxon>
        <taxon>Unidentata</taxon>
        <taxon>Episquamata</taxon>
        <taxon>Toxicofera</taxon>
        <taxon>Serpentes</taxon>
        <taxon>Colubroidea</taxon>
        <taxon>Viperidae</taxon>
        <taxon>Crotalinae</taxon>
        <taxon>Gloydius</taxon>
    </lineage>
</organism>